<name>RL17_SYNAS</name>
<gene>
    <name evidence="1" type="primary">rplQ</name>
    <name type="ordered locus">SYNAS_03290</name>
    <name type="ORF">SYN_01603</name>
</gene>
<evidence type="ECO:0000255" key="1">
    <source>
        <dbReference type="HAMAP-Rule" id="MF_01368"/>
    </source>
</evidence>
<evidence type="ECO:0000305" key="2"/>
<reference key="1">
    <citation type="journal article" date="2007" name="Proc. Natl. Acad. Sci. U.S.A.">
        <title>The genome of Syntrophus aciditrophicus: life at the thermodynamic limit of microbial growth.</title>
        <authorList>
            <person name="McInerney M.J."/>
            <person name="Rohlin L."/>
            <person name="Mouttaki H."/>
            <person name="Kim U."/>
            <person name="Krupp R.S."/>
            <person name="Rios-Hernandez L."/>
            <person name="Sieber J."/>
            <person name="Struchtemeyer C.G."/>
            <person name="Bhattacharyya A."/>
            <person name="Campbell J.W."/>
            <person name="Gunsalus R.P."/>
        </authorList>
    </citation>
    <scope>NUCLEOTIDE SEQUENCE [LARGE SCALE GENOMIC DNA]</scope>
    <source>
        <strain>SB</strain>
    </source>
</reference>
<comment type="subunit">
    <text evidence="1">Part of the 50S ribosomal subunit. Contacts protein L32.</text>
</comment>
<comment type="similarity">
    <text evidence="1">Belongs to the bacterial ribosomal protein bL17 family.</text>
</comment>
<dbReference type="EMBL" id="CP000252">
    <property type="protein sequence ID" value="ABC76208.1"/>
    <property type="molecule type" value="Genomic_DNA"/>
</dbReference>
<dbReference type="SMR" id="Q2LQC8"/>
<dbReference type="FunCoup" id="Q2LQC8">
    <property type="interactions" value="582"/>
</dbReference>
<dbReference type="STRING" id="56780.SYN_01603"/>
<dbReference type="KEGG" id="sat:SYN_01603"/>
<dbReference type="eggNOG" id="COG0203">
    <property type="taxonomic scope" value="Bacteria"/>
</dbReference>
<dbReference type="HOGENOM" id="CLU_074407_2_2_7"/>
<dbReference type="InParanoid" id="Q2LQC8"/>
<dbReference type="OrthoDB" id="9809073at2"/>
<dbReference type="Proteomes" id="UP000001933">
    <property type="component" value="Chromosome"/>
</dbReference>
<dbReference type="GO" id="GO:0022625">
    <property type="term" value="C:cytosolic large ribosomal subunit"/>
    <property type="evidence" value="ECO:0007669"/>
    <property type="project" value="TreeGrafter"/>
</dbReference>
<dbReference type="GO" id="GO:0003735">
    <property type="term" value="F:structural constituent of ribosome"/>
    <property type="evidence" value="ECO:0007669"/>
    <property type="project" value="InterPro"/>
</dbReference>
<dbReference type="GO" id="GO:0006412">
    <property type="term" value="P:translation"/>
    <property type="evidence" value="ECO:0007669"/>
    <property type="project" value="UniProtKB-UniRule"/>
</dbReference>
<dbReference type="FunFam" id="3.90.1030.10:FF:000001">
    <property type="entry name" value="50S ribosomal protein L17"/>
    <property type="match status" value="1"/>
</dbReference>
<dbReference type="Gene3D" id="3.90.1030.10">
    <property type="entry name" value="Ribosomal protein L17"/>
    <property type="match status" value="1"/>
</dbReference>
<dbReference type="HAMAP" id="MF_01368">
    <property type="entry name" value="Ribosomal_bL17"/>
    <property type="match status" value="1"/>
</dbReference>
<dbReference type="InterPro" id="IPR000456">
    <property type="entry name" value="Ribosomal_bL17"/>
</dbReference>
<dbReference type="InterPro" id="IPR036373">
    <property type="entry name" value="Ribosomal_bL17_sf"/>
</dbReference>
<dbReference type="NCBIfam" id="TIGR00059">
    <property type="entry name" value="L17"/>
    <property type="match status" value="1"/>
</dbReference>
<dbReference type="PANTHER" id="PTHR14413:SF16">
    <property type="entry name" value="LARGE RIBOSOMAL SUBUNIT PROTEIN BL17M"/>
    <property type="match status" value="1"/>
</dbReference>
<dbReference type="PANTHER" id="PTHR14413">
    <property type="entry name" value="RIBOSOMAL PROTEIN L17"/>
    <property type="match status" value="1"/>
</dbReference>
<dbReference type="Pfam" id="PF01196">
    <property type="entry name" value="Ribosomal_L17"/>
    <property type="match status" value="1"/>
</dbReference>
<dbReference type="SUPFAM" id="SSF64263">
    <property type="entry name" value="Prokaryotic ribosomal protein L17"/>
    <property type="match status" value="1"/>
</dbReference>
<keyword id="KW-1185">Reference proteome</keyword>
<keyword id="KW-0687">Ribonucleoprotein</keyword>
<keyword id="KW-0689">Ribosomal protein</keyword>
<feature type="chain" id="PRO_1000068029" description="Large ribosomal subunit protein bL17">
    <location>
        <begin position="1"/>
        <end position="125"/>
    </location>
</feature>
<protein>
    <recommendedName>
        <fullName evidence="1">Large ribosomal subunit protein bL17</fullName>
    </recommendedName>
    <alternativeName>
        <fullName evidence="2">50S ribosomal protein L17</fullName>
    </alternativeName>
</protein>
<organism>
    <name type="scientific">Syntrophus aciditrophicus (strain SB)</name>
    <dbReference type="NCBI Taxonomy" id="56780"/>
    <lineage>
        <taxon>Bacteria</taxon>
        <taxon>Pseudomonadati</taxon>
        <taxon>Thermodesulfobacteriota</taxon>
        <taxon>Syntrophia</taxon>
        <taxon>Syntrophales</taxon>
        <taxon>Syntrophaceae</taxon>
        <taxon>Syntrophus</taxon>
    </lineage>
</organism>
<sequence>MRHGKTGRKLGRTSSHRTAMLRNMVTSFLRYESVKTTDTRAKELRKLAEKMITLGKRGDVHARRQALAVVRDRAVVTKIFNELAERYRDRPGGYTRIIKAGYREGDSAPISIIECVRDISGTQSK</sequence>
<accession>Q2LQC8</accession>
<proteinExistence type="inferred from homology"/>